<dbReference type="EMBL" id="CP000521">
    <property type="protein sequence ID" value="ABO13478.1"/>
    <property type="molecule type" value="Genomic_DNA"/>
</dbReference>
<dbReference type="RefSeq" id="WP_000070912.1">
    <property type="nucleotide sequence ID" value="NZ_CP053098.1"/>
</dbReference>
<dbReference type="SMR" id="A3M984"/>
<dbReference type="GeneID" id="97425198"/>
<dbReference type="KEGG" id="acb:A1S_3081"/>
<dbReference type="HOGENOM" id="CLU_122625_1_3_6"/>
<dbReference type="GO" id="GO:1990904">
    <property type="term" value="C:ribonucleoprotein complex"/>
    <property type="evidence" value="ECO:0007669"/>
    <property type="project" value="UniProtKB-KW"/>
</dbReference>
<dbReference type="GO" id="GO:0005840">
    <property type="term" value="C:ribosome"/>
    <property type="evidence" value="ECO:0007669"/>
    <property type="project" value="UniProtKB-KW"/>
</dbReference>
<dbReference type="GO" id="GO:0003735">
    <property type="term" value="F:structural constituent of ribosome"/>
    <property type="evidence" value="ECO:0007669"/>
    <property type="project" value="InterPro"/>
</dbReference>
<dbReference type="GO" id="GO:0000049">
    <property type="term" value="F:tRNA binding"/>
    <property type="evidence" value="ECO:0007669"/>
    <property type="project" value="UniProtKB-UniRule"/>
</dbReference>
<dbReference type="GO" id="GO:0006412">
    <property type="term" value="P:translation"/>
    <property type="evidence" value="ECO:0007669"/>
    <property type="project" value="UniProtKB-UniRule"/>
</dbReference>
<dbReference type="FunFam" id="3.30.70.600:FF:000001">
    <property type="entry name" value="30S ribosomal protein S10"/>
    <property type="match status" value="1"/>
</dbReference>
<dbReference type="Gene3D" id="3.30.70.600">
    <property type="entry name" value="Ribosomal protein S10 domain"/>
    <property type="match status" value="1"/>
</dbReference>
<dbReference type="HAMAP" id="MF_00508">
    <property type="entry name" value="Ribosomal_uS10"/>
    <property type="match status" value="1"/>
</dbReference>
<dbReference type="InterPro" id="IPR001848">
    <property type="entry name" value="Ribosomal_uS10"/>
</dbReference>
<dbReference type="InterPro" id="IPR018268">
    <property type="entry name" value="Ribosomal_uS10_CS"/>
</dbReference>
<dbReference type="InterPro" id="IPR027486">
    <property type="entry name" value="Ribosomal_uS10_dom"/>
</dbReference>
<dbReference type="InterPro" id="IPR036838">
    <property type="entry name" value="Ribosomal_uS10_dom_sf"/>
</dbReference>
<dbReference type="NCBIfam" id="NF001861">
    <property type="entry name" value="PRK00596.1"/>
    <property type="match status" value="1"/>
</dbReference>
<dbReference type="NCBIfam" id="TIGR01049">
    <property type="entry name" value="rpsJ_bact"/>
    <property type="match status" value="1"/>
</dbReference>
<dbReference type="PANTHER" id="PTHR11700">
    <property type="entry name" value="30S RIBOSOMAL PROTEIN S10 FAMILY MEMBER"/>
    <property type="match status" value="1"/>
</dbReference>
<dbReference type="Pfam" id="PF00338">
    <property type="entry name" value="Ribosomal_S10"/>
    <property type="match status" value="1"/>
</dbReference>
<dbReference type="PRINTS" id="PR00971">
    <property type="entry name" value="RIBOSOMALS10"/>
</dbReference>
<dbReference type="SMART" id="SM01403">
    <property type="entry name" value="Ribosomal_S10"/>
    <property type="match status" value="1"/>
</dbReference>
<dbReference type="SUPFAM" id="SSF54999">
    <property type="entry name" value="Ribosomal protein S10"/>
    <property type="match status" value="1"/>
</dbReference>
<dbReference type="PROSITE" id="PS00361">
    <property type="entry name" value="RIBOSOMAL_S10"/>
    <property type="match status" value="1"/>
</dbReference>
<organism>
    <name type="scientific">Acinetobacter baumannii (strain ATCC 17978 / DSM 105126 / CIP 53.77 / LMG 1025 / NCDC KC755 / 5377)</name>
    <dbReference type="NCBI Taxonomy" id="400667"/>
    <lineage>
        <taxon>Bacteria</taxon>
        <taxon>Pseudomonadati</taxon>
        <taxon>Pseudomonadota</taxon>
        <taxon>Gammaproteobacteria</taxon>
        <taxon>Moraxellales</taxon>
        <taxon>Moraxellaceae</taxon>
        <taxon>Acinetobacter</taxon>
        <taxon>Acinetobacter calcoaceticus/baumannii complex</taxon>
    </lineage>
</organism>
<evidence type="ECO:0000255" key="1">
    <source>
        <dbReference type="HAMAP-Rule" id="MF_00508"/>
    </source>
</evidence>
<evidence type="ECO:0000305" key="2"/>
<name>RS10_ACIBT</name>
<reference key="1">
    <citation type="journal article" date="2007" name="Genes Dev.">
        <title>New insights into Acinetobacter baumannii pathogenesis revealed by high-density pyrosequencing and transposon mutagenesis.</title>
        <authorList>
            <person name="Smith M.G."/>
            <person name="Gianoulis T.A."/>
            <person name="Pukatzki S."/>
            <person name="Mekalanos J.J."/>
            <person name="Ornston L.N."/>
            <person name="Gerstein M."/>
            <person name="Snyder M."/>
        </authorList>
    </citation>
    <scope>NUCLEOTIDE SEQUENCE [LARGE SCALE GENOMIC DNA]</scope>
    <source>
        <strain>ATCC 17978 / DSM 105126 / CIP 53.77 / LMG 1025 / NCDC KC755 / 5377</strain>
    </source>
</reference>
<feature type="chain" id="PRO_1000014976" description="Small ribosomal subunit protein uS10">
    <location>
        <begin position="1"/>
        <end position="103"/>
    </location>
</feature>
<proteinExistence type="inferred from homology"/>
<accession>A3M984</accession>
<comment type="function">
    <text evidence="1">Involved in the binding of tRNA to the ribosomes.</text>
</comment>
<comment type="subunit">
    <text evidence="1">Part of the 30S ribosomal subunit.</text>
</comment>
<comment type="similarity">
    <text evidence="1">Belongs to the universal ribosomal protein uS10 family.</text>
</comment>
<keyword id="KW-0687">Ribonucleoprotein</keyword>
<keyword id="KW-0689">Ribosomal protein</keyword>
<sequence>MSNQRIRIRLKSFDHRLIDQSAQEIVETAKRTGAQVCGPIPMPTRIERFNVLTSPHVNKDARDQYEIRTYKRLIDIVQPTDKTVDALMKLDLAAGVDVQIALG</sequence>
<gene>
    <name evidence="1" type="primary">rpsJ</name>
    <name type="ordered locus">A1S_3081</name>
</gene>
<protein>
    <recommendedName>
        <fullName evidence="1">Small ribosomal subunit protein uS10</fullName>
    </recommendedName>
    <alternativeName>
        <fullName evidence="2">30S ribosomal protein S10</fullName>
    </alternativeName>
</protein>